<feature type="chain" id="PRO_1000164024" description="Regulatory protein RecX">
    <location>
        <begin position="1"/>
        <end position="267"/>
    </location>
</feature>
<accession>B9DMW2</accession>
<keyword id="KW-0963">Cytoplasm</keyword>
<keyword id="KW-1185">Reference proteome</keyword>
<gene>
    <name evidence="1" type="primary">recX</name>
    <name type="ordered locus">Sca_1446</name>
</gene>
<comment type="function">
    <text evidence="1">Modulates RecA activity.</text>
</comment>
<comment type="subcellular location">
    <subcellularLocation>
        <location evidence="1">Cytoplasm</location>
    </subcellularLocation>
</comment>
<comment type="similarity">
    <text evidence="1">Belongs to the RecX family.</text>
</comment>
<sequence length="267" mass="31684">MPKVTKIEVQKKNKERFNLYLDESFEMGIDMDTLVHFNLKKGDVLTAANMEDIQKYEHFRFGLHLAIQYLSYRKRTEQEVVQHLQKHEISESAIAEVIDYCNREGYIDHEDYAESLKNTMIRTTDKGPEIFRQKLIKAGIEKSLVENYTAKYEEEQPLEDVEILADKLLHQKKGPKKKRIDKVKQSLLQKGYSFEVINEAMQNLDFEPDSEEIDLLLQRELEKVFRKYERKYEGRQLEMKTIEALLRKGYEYDTIKDKMRESGIGDE</sequence>
<name>RECX_STACT</name>
<organism>
    <name type="scientific">Staphylococcus carnosus (strain TM300)</name>
    <dbReference type="NCBI Taxonomy" id="396513"/>
    <lineage>
        <taxon>Bacteria</taxon>
        <taxon>Bacillati</taxon>
        <taxon>Bacillota</taxon>
        <taxon>Bacilli</taxon>
        <taxon>Bacillales</taxon>
        <taxon>Staphylococcaceae</taxon>
        <taxon>Staphylococcus</taxon>
    </lineage>
</organism>
<protein>
    <recommendedName>
        <fullName evidence="1">Regulatory protein RecX</fullName>
    </recommendedName>
</protein>
<evidence type="ECO:0000255" key="1">
    <source>
        <dbReference type="HAMAP-Rule" id="MF_01114"/>
    </source>
</evidence>
<proteinExistence type="inferred from homology"/>
<dbReference type="EMBL" id="AM295250">
    <property type="protein sequence ID" value="CAL28351.1"/>
    <property type="molecule type" value="Genomic_DNA"/>
</dbReference>
<dbReference type="RefSeq" id="WP_015900691.1">
    <property type="nucleotide sequence ID" value="NC_012121.1"/>
</dbReference>
<dbReference type="SMR" id="B9DMW2"/>
<dbReference type="GeneID" id="93793901"/>
<dbReference type="KEGG" id="sca:SCA_1446"/>
<dbReference type="eggNOG" id="COG2137">
    <property type="taxonomic scope" value="Bacteria"/>
</dbReference>
<dbReference type="HOGENOM" id="CLU_066607_4_0_9"/>
<dbReference type="OrthoDB" id="5421057at2"/>
<dbReference type="BioCyc" id="SCAR396513:SCA_RS07360-MONOMER"/>
<dbReference type="Proteomes" id="UP000000444">
    <property type="component" value="Chromosome"/>
</dbReference>
<dbReference type="GO" id="GO:0005737">
    <property type="term" value="C:cytoplasm"/>
    <property type="evidence" value="ECO:0007669"/>
    <property type="project" value="UniProtKB-SubCell"/>
</dbReference>
<dbReference type="GO" id="GO:0006282">
    <property type="term" value="P:regulation of DNA repair"/>
    <property type="evidence" value="ECO:0007669"/>
    <property type="project" value="UniProtKB-UniRule"/>
</dbReference>
<dbReference type="Gene3D" id="1.10.10.10">
    <property type="entry name" value="Winged helix-like DNA-binding domain superfamily/Winged helix DNA-binding domain"/>
    <property type="match status" value="4"/>
</dbReference>
<dbReference type="HAMAP" id="MF_01114">
    <property type="entry name" value="RecX"/>
    <property type="match status" value="1"/>
</dbReference>
<dbReference type="InterPro" id="IPR053926">
    <property type="entry name" value="RecX_HTH_1st"/>
</dbReference>
<dbReference type="InterPro" id="IPR053925">
    <property type="entry name" value="RecX_HTH_3rd"/>
</dbReference>
<dbReference type="InterPro" id="IPR003783">
    <property type="entry name" value="Regulatory_RecX"/>
</dbReference>
<dbReference type="InterPro" id="IPR036388">
    <property type="entry name" value="WH-like_DNA-bd_sf"/>
</dbReference>
<dbReference type="NCBIfam" id="NF010733">
    <property type="entry name" value="PRK14135.1"/>
    <property type="match status" value="1"/>
</dbReference>
<dbReference type="PANTHER" id="PTHR33602">
    <property type="entry name" value="REGULATORY PROTEIN RECX FAMILY PROTEIN"/>
    <property type="match status" value="1"/>
</dbReference>
<dbReference type="PANTHER" id="PTHR33602:SF1">
    <property type="entry name" value="REGULATORY PROTEIN RECX FAMILY PROTEIN"/>
    <property type="match status" value="1"/>
</dbReference>
<dbReference type="Pfam" id="PF21982">
    <property type="entry name" value="RecX_HTH1"/>
    <property type="match status" value="1"/>
</dbReference>
<dbReference type="Pfam" id="PF21981">
    <property type="entry name" value="RecX_HTH3"/>
    <property type="match status" value="2"/>
</dbReference>
<reference key="1">
    <citation type="journal article" date="2009" name="Appl. Environ. Microbiol.">
        <title>Genome analysis of the meat starter culture bacterium Staphylococcus carnosus TM300.</title>
        <authorList>
            <person name="Rosenstein R."/>
            <person name="Nerz C."/>
            <person name="Biswas L."/>
            <person name="Resch A."/>
            <person name="Raddatz G."/>
            <person name="Schuster S.C."/>
            <person name="Goetz F."/>
        </authorList>
    </citation>
    <scope>NUCLEOTIDE SEQUENCE [LARGE SCALE GENOMIC DNA]</scope>
    <source>
        <strain>TM300</strain>
    </source>
</reference>